<gene>
    <name evidence="22" type="primary">Grin3a</name>
</gene>
<keyword id="KW-0002">3D-structure</keyword>
<keyword id="KW-0025">Alternative splicing</keyword>
<keyword id="KW-0106">Calcium</keyword>
<keyword id="KW-1003">Cell membrane</keyword>
<keyword id="KW-0175">Coiled coil</keyword>
<keyword id="KW-1015">Disulfide bond</keyword>
<keyword id="KW-0325">Glycoprotein</keyword>
<keyword id="KW-0407">Ion channel</keyword>
<keyword id="KW-0406">Ion transport</keyword>
<keyword id="KW-1071">Ligand-gated ion channel</keyword>
<keyword id="KW-0460">Magnesium</keyword>
<keyword id="KW-0472">Membrane</keyword>
<keyword id="KW-0628">Postsynaptic cell membrane</keyword>
<keyword id="KW-0675">Receptor</keyword>
<keyword id="KW-1185">Reference proteome</keyword>
<keyword id="KW-0732">Signal</keyword>
<keyword id="KW-0770">Synapse</keyword>
<keyword id="KW-0812">Transmembrane</keyword>
<keyword id="KW-1133">Transmembrane helix</keyword>
<keyword id="KW-0813">Transport</keyword>
<feature type="signal peptide" evidence="3">
    <location>
        <begin position="1"/>
        <end position="23"/>
    </location>
</feature>
<feature type="chain" id="PRO_0000011569" description="Glutamate receptor ionotropic, NMDA 3A">
    <location>
        <begin position="24"/>
        <end position="1135"/>
    </location>
</feature>
<feature type="topological domain" description="Extracellular" evidence="1">
    <location>
        <begin position="24"/>
        <end position="674"/>
    </location>
</feature>
<feature type="transmembrane region" description="Helical" evidence="1">
    <location>
        <begin position="675"/>
        <end position="694"/>
    </location>
</feature>
<feature type="topological domain" description="Cytoplasmic" evidence="1">
    <location>
        <begin position="695"/>
        <end position="715"/>
    </location>
</feature>
<feature type="intramembrane region" description="Discontinuously helical" evidence="1">
    <location>
        <begin position="716"/>
        <end position="727"/>
    </location>
</feature>
<feature type="topological domain" description="Cytoplasmic" evidence="1">
    <location>
        <begin position="728"/>
        <end position="741"/>
    </location>
</feature>
<feature type="transmembrane region" description="Helical" evidence="1">
    <location>
        <begin position="742"/>
        <end position="761"/>
    </location>
</feature>
<feature type="topological domain" description="Extracellular" evidence="1">
    <location>
        <begin position="762"/>
        <end position="932"/>
    </location>
</feature>
<feature type="transmembrane region" description="Helical" evidence="1">
    <location>
        <begin position="933"/>
        <end position="948"/>
    </location>
</feature>
<feature type="topological domain" description="Cytoplasmic" evidence="1">
    <location>
        <begin position="949"/>
        <end position="1135"/>
    </location>
</feature>
<feature type="region of interest" description="Disordered" evidence="4">
    <location>
        <begin position="60"/>
        <end position="117"/>
    </location>
</feature>
<feature type="region of interest" description="PPP2CB binding site" evidence="6">
    <location>
        <begin position="951"/>
        <end position="987"/>
    </location>
</feature>
<feature type="region of interest" description="GIT1-binding" evidence="13">
    <location>
        <begin position="1082"/>
        <end position="1115"/>
    </location>
</feature>
<feature type="coiled-coil region" evidence="3">
    <location>
        <begin position="1080"/>
        <end position="1129"/>
    </location>
</feature>
<feature type="binding site" evidence="11 23">
    <location>
        <position position="631"/>
    </location>
    <ligand>
        <name>glycine</name>
        <dbReference type="ChEBI" id="CHEBI:57305"/>
    </ligand>
</feature>
<feature type="binding site" evidence="11 24">
    <location>
        <position position="633"/>
    </location>
    <ligand>
        <name>D-serine</name>
        <dbReference type="ChEBI" id="CHEBI:35247"/>
    </ligand>
</feature>
<feature type="binding site" evidence="11 23">
    <location>
        <position position="633"/>
    </location>
    <ligand>
        <name>glycine</name>
        <dbReference type="ChEBI" id="CHEBI:57305"/>
    </ligand>
</feature>
<feature type="binding site" evidence="11 24">
    <location>
        <position position="638"/>
    </location>
    <ligand>
        <name>D-serine</name>
        <dbReference type="ChEBI" id="CHEBI:35247"/>
    </ligand>
</feature>
<feature type="binding site" evidence="11 23">
    <location>
        <position position="638"/>
    </location>
    <ligand>
        <name>glycine</name>
        <dbReference type="ChEBI" id="CHEBI:57305"/>
    </ligand>
</feature>
<feature type="binding site" evidence="11 24">
    <location>
        <position position="801"/>
    </location>
    <ligand>
        <name>D-serine</name>
        <dbReference type="ChEBI" id="CHEBI:35247"/>
    </ligand>
</feature>
<feature type="binding site" evidence="11 23">
    <location>
        <position position="801"/>
    </location>
    <ligand>
        <name>glycine</name>
        <dbReference type="ChEBI" id="CHEBI:57305"/>
    </ligand>
</feature>
<feature type="binding site" evidence="11 24">
    <location>
        <position position="802"/>
    </location>
    <ligand>
        <name>D-serine</name>
        <dbReference type="ChEBI" id="CHEBI:35247"/>
    </ligand>
</feature>
<feature type="binding site" evidence="11 24">
    <location>
        <position position="845"/>
    </location>
    <ligand>
        <name>D-serine</name>
        <dbReference type="ChEBI" id="CHEBI:35247"/>
    </ligand>
</feature>
<feature type="binding site" evidence="11 23">
    <location>
        <position position="845"/>
    </location>
    <ligand>
        <name>glycine</name>
        <dbReference type="ChEBI" id="CHEBI:57305"/>
    </ligand>
</feature>
<feature type="glycosylation site" description="N-linked (GlcNAc...) asparagine" evidence="3">
    <location>
        <position position="145"/>
    </location>
</feature>
<feature type="glycosylation site" description="N-linked (GlcNAc...) asparagine" evidence="3">
    <location>
        <position position="264"/>
    </location>
</feature>
<feature type="glycosylation site" description="N-linked (GlcNAc...) asparagine" evidence="3">
    <location>
        <position position="275"/>
    </location>
</feature>
<feature type="glycosylation site" description="N-linked (GlcNAc...) asparagine" evidence="3">
    <location>
        <position position="285"/>
    </location>
</feature>
<feature type="glycosylation site" description="N-linked (GlcNAc...) asparagine" evidence="3">
    <location>
        <position position="296"/>
    </location>
</feature>
<feature type="glycosylation site" description="N-linked (GlcNAc...) asparagine" evidence="3">
    <location>
        <position position="300"/>
    </location>
</feature>
<feature type="glycosylation site" description="N-linked (GlcNAc...) asparagine" evidence="3">
    <location>
        <position position="426"/>
    </location>
</feature>
<feature type="glycosylation site" description="N-linked (GlcNAc...) asparagine" evidence="3">
    <location>
        <position position="439"/>
    </location>
</feature>
<feature type="glycosylation site" description="N-linked (GlcNAc...) asparagine" evidence="3">
    <location>
        <position position="549"/>
    </location>
</feature>
<feature type="glycosylation site" description="N-linked (GlcNAc...) asparagine" evidence="3">
    <location>
        <position position="565"/>
    </location>
</feature>
<feature type="glycosylation site" description="N-linked (GlcNAc...) asparagine" evidence="3">
    <location>
        <position position="886"/>
    </location>
</feature>
<feature type="disulfide bond" evidence="11 12 23 24 25 26">
    <location>
        <begin position="537"/>
        <end position="575"/>
    </location>
</feature>
<feature type="disulfide bond" evidence="11 12 23 24 25 26">
    <location>
        <begin position="543"/>
        <end position="576"/>
    </location>
</feature>
<feature type="disulfide bond" evidence="12 26">
    <location>
        <begin position="859"/>
        <end position="913"/>
    </location>
</feature>
<feature type="splice variant" id="VSP_011512" description="In isoform 2." evidence="19 20">
    <location>
        <begin position="1003"/>
        <end position="1022"/>
    </location>
</feature>
<feature type="mutagenesis site" description="Endocytosis-deficient. When transfected in pyramidal neurons transfected, increases the rate of spine elimination and reduction in the stability of preexisting spines, compared to the wild-type protein. No effect on spine growth rate." evidence="14">
    <original>YWL</original>
    <variation>AAA</variation>
    <location>
        <begin position="971"/>
        <end position="973"/>
    </location>
</feature>
<feature type="mutagenesis site" description="When expressed in pyramidal neurons, increases spine stability and reduces spine elimination." evidence="14">
    <location>
        <begin position="1082"/>
        <end position="1115"/>
    </location>
</feature>
<feature type="strand" evidence="27">
    <location>
        <begin position="513"/>
        <end position="519"/>
    </location>
</feature>
<feature type="turn" evidence="27">
    <location>
        <begin position="523"/>
        <end position="525"/>
    </location>
</feature>
<feature type="strand" evidence="27">
    <location>
        <begin position="526"/>
        <end position="529"/>
    </location>
</feature>
<feature type="strand" evidence="27">
    <location>
        <begin position="540"/>
        <end position="544"/>
    </location>
</feature>
<feature type="helix" evidence="27">
    <location>
        <begin position="551"/>
        <end position="562"/>
    </location>
</feature>
<feature type="strand" evidence="27">
    <location>
        <begin position="563"/>
        <end position="565"/>
    </location>
</feature>
<feature type="helix" evidence="27">
    <location>
        <begin position="570"/>
        <end position="572"/>
    </location>
</feature>
<feature type="strand" evidence="27">
    <location>
        <begin position="573"/>
        <end position="578"/>
    </location>
</feature>
<feature type="helix" evidence="27">
    <location>
        <begin position="579"/>
        <end position="591"/>
    </location>
</feature>
<feature type="strand" evidence="27">
    <location>
        <begin position="593"/>
        <end position="599"/>
    </location>
</feature>
<feature type="helix" evidence="27">
    <location>
        <begin position="615"/>
        <end position="621"/>
    </location>
</feature>
<feature type="strand" evidence="27">
    <location>
        <begin position="626"/>
        <end position="628"/>
    </location>
</feature>
<feature type="helix" evidence="27">
    <location>
        <begin position="636"/>
        <end position="639"/>
    </location>
</feature>
<feature type="strand" evidence="27">
    <location>
        <begin position="642"/>
        <end position="644"/>
    </location>
</feature>
<feature type="strand" evidence="27">
    <location>
        <begin position="648"/>
        <end position="658"/>
    </location>
</feature>
<feature type="helix" evidence="27">
    <location>
        <begin position="783"/>
        <end position="786"/>
    </location>
</feature>
<feature type="helix" evidence="27">
    <location>
        <begin position="801"/>
        <end position="809"/>
    </location>
</feature>
<feature type="helix" evidence="27">
    <location>
        <begin position="811"/>
        <end position="817"/>
    </location>
</feature>
<feature type="helix" evidence="27">
    <location>
        <begin position="818"/>
        <end position="820"/>
    </location>
</feature>
<feature type="strand" evidence="27">
    <location>
        <begin position="822"/>
        <end position="824"/>
    </location>
</feature>
<feature type="helix" evidence="27">
    <location>
        <begin position="825"/>
        <end position="833"/>
    </location>
</feature>
<feature type="strand" evidence="27">
    <location>
        <begin position="834"/>
        <end position="836"/>
    </location>
</feature>
<feature type="strand" evidence="27">
    <location>
        <begin position="840"/>
        <end position="845"/>
    </location>
</feature>
<feature type="helix" evidence="27">
    <location>
        <begin position="846"/>
        <end position="854"/>
    </location>
</feature>
<feature type="strand" evidence="27">
    <location>
        <begin position="857"/>
        <end position="859"/>
    </location>
</feature>
<feature type="strand" evidence="27">
    <location>
        <begin position="861"/>
        <end position="863"/>
    </location>
</feature>
<feature type="strand" evidence="27">
    <location>
        <begin position="868"/>
        <end position="873"/>
    </location>
</feature>
<feature type="strand" evidence="28">
    <location>
        <begin position="876"/>
        <end position="878"/>
    </location>
</feature>
<feature type="helix" evidence="27">
    <location>
        <begin position="883"/>
        <end position="896"/>
    </location>
</feature>
<feature type="helix" evidence="27">
    <location>
        <begin position="899"/>
        <end position="907"/>
    </location>
</feature>
<accession>Q9R1M7</accession>
<accession>O09098</accession>
<accession>O09155</accession>
<accession>Q62800</accession>
<accession>Q63268</accession>
<accession>Q9Z2H0</accession>
<evidence type="ECO:0000250" key="1">
    <source>
        <dbReference type="UniProtKB" id="Q13224"/>
    </source>
</evidence>
<evidence type="ECO:0000250" key="2">
    <source>
        <dbReference type="UniProtKB" id="Q8TCU5"/>
    </source>
</evidence>
<evidence type="ECO:0000255" key="3"/>
<evidence type="ECO:0000256" key="4">
    <source>
        <dbReference type="SAM" id="MobiDB-lite"/>
    </source>
</evidence>
<evidence type="ECO:0000269" key="5">
    <source>
    </source>
</evidence>
<evidence type="ECO:0000269" key="6">
    <source>
    </source>
</evidence>
<evidence type="ECO:0000269" key="7">
    <source>
    </source>
</evidence>
<evidence type="ECO:0000269" key="8">
    <source>
    </source>
</evidence>
<evidence type="ECO:0000269" key="9">
    <source>
    </source>
</evidence>
<evidence type="ECO:0000269" key="10">
    <source>
    </source>
</evidence>
<evidence type="ECO:0000269" key="11">
    <source>
    </source>
</evidence>
<evidence type="ECO:0000269" key="12">
    <source>
    </source>
</evidence>
<evidence type="ECO:0000269" key="13">
    <source>
    </source>
</evidence>
<evidence type="ECO:0000269" key="14">
    <source>
    </source>
</evidence>
<evidence type="ECO:0000269" key="15">
    <source>
    </source>
</evidence>
<evidence type="ECO:0000269" key="16">
    <source>
    </source>
</evidence>
<evidence type="ECO:0000269" key="17">
    <source>
    </source>
</evidence>
<evidence type="ECO:0000303" key="18">
    <source>
    </source>
</evidence>
<evidence type="ECO:0000303" key="19">
    <source>
    </source>
</evidence>
<evidence type="ECO:0000303" key="20">
    <source>
    </source>
</evidence>
<evidence type="ECO:0000305" key="21"/>
<evidence type="ECO:0000312" key="22">
    <source>
        <dbReference type="RGD" id="621704"/>
    </source>
</evidence>
<evidence type="ECO:0007744" key="23">
    <source>
        <dbReference type="PDB" id="2RC7"/>
    </source>
</evidence>
<evidence type="ECO:0007744" key="24">
    <source>
        <dbReference type="PDB" id="2RC8"/>
    </source>
</evidence>
<evidence type="ECO:0007744" key="25">
    <source>
        <dbReference type="PDB" id="2RC9"/>
    </source>
</evidence>
<evidence type="ECO:0007744" key="26">
    <source>
        <dbReference type="PDB" id="4KCD"/>
    </source>
</evidence>
<evidence type="ECO:0007829" key="27">
    <source>
        <dbReference type="PDB" id="2RC8"/>
    </source>
</evidence>
<evidence type="ECO:0007829" key="28">
    <source>
        <dbReference type="PDB" id="4KCD"/>
    </source>
</evidence>
<comment type="function">
    <text evidence="5 7 8 10 11 13 14">Component of a non-conventional N-methyl-D-aspartate (NMDA) receptors (NMDARs) that function as heterotetrameric, ligand-gated cation channels with low calcium permeability and low voltage-dependent block by Mg(2+) (PubMed:11160393, PubMed:11823786, PubMed:11929923, PubMed:18003876). During the development of neural circuits, participates in the synaptic refinement period, restricting spine maturation and growth (PubMed:25009255). Forms glutamatergic receptor complexes with GluN1 and GluN2 subunits which are activated by glycine binding to the GluN1 and GluN3 subunits and L-glutamate binding to GluN2 subunits (PubMed:11929923). Forms excitatory glycinergic receptor complexes with GluN1 alone which are activated by glycine binding to the GluN1 and GluN3 subunits (PubMed:11823786). GluN3A subunit also binds D-serine (PubMed:18636091). Each GluN3 subunit confers differential attributes to channel properties, including activation, deactivation and desensitization kinetics, pH sensitivity, Ca2(+) permeability, and binding to allosteric modulators (PubMed:11160393, PubMed:11929923). By competing with GIT1 interaction with ARHGEF7/beta-PIX, may reduce GIT1/ARHGEF7-regulated local activation of RAC1, hence affecting signaling and limiting the maturation and growth of inactive synapses (PubMed:24297929).</text>
</comment>
<comment type="catalytic activity">
    <reaction evidence="5 7 8 10">
        <text>Ca(2+)(in) = Ca(2+)(out)</text>
        <dbReference type="Rhea" id="RHEA:29671"/>
        <dbReference type="ChEBI" id="CHEBI:29108"/>
    </reaction>
</comment>
<comment type="catalytic activity">
    <reaction evidence="7 8">
        <text>Na(+)(in) = Na(+)(out)</text>
        <dbReference type="Rhea" id="RHEA:34963"/>
        <dbReference type="ChEBI" id="CHEBI:29101"/>
    </reaction>
</comment>
<comment type="activity regulation">
    <text evidence="7">Excitatory glycine receptors are inhibited by D-serine at a concentrion of 10uM.</text>
</comment>
<comment type="subunit">
    <text evidence="2 5 6 8 9">Heterotetramer. Forms heterotetrameric channels composed of two GluN1/zeta subunits (GRIN1), and two identical GluN3 subunits (GRIN3A or GRIN3B) (in vitro) (By similarity). Can also form heterotetrameric channels that contain at least two GluN1 subunits and at least a combination of one GluN2 and one GluN3 subunits (in vitro) (PubMed:11160393, PubMed:11929923, PubMed:12391275). Does not form functional homomeric channels (PubMed:11160393). Found in a complex with GRIN1, GRIN2A or GRIN2B and PPP2CB (PubMed:11588171). Probably interacts with PPP2CB (PubMed:11588171). No complex with PPP2CB is detected when NMDARs are stimulated by NMDA (PubMed:11588171). Interacts (via C-terminus) with GIT1, but not with GRIA1/GluA1, nor with synaptophysin/SYP; this interaction competes with GIT1 interaction with ARHGEF7/beta-PIX (PubMed:24297929).</text>
</comment>
<comment type="subcellular location">
    <subcellularLocation>
        <location evidence="5 6">Cell membrane</location>
        <topology evidence="1">Multi-pass membrane protein</topology>
    </subcellularLocation>
    <subcellularLocation>
        <location evidence="6">Postsynaptic cell membrane</location>
    </subcellularLocation>
    <subcellularLocation>
        <location evidence="6">Postsynaptic density</location>
    </subcellularLocation>
    <text evidence="5">Requires the presence of GRIN1 to be targeted at the plasma membrane.</text>
</comment>
<comment type="alternative products">
    <event type="alternative splicing"/>
    <isoform>
        <id>Q9R1M7-1</id>
        <name>1</name>
        <name>NR3-long</name>
        <name>NR3-l</name>
        <name>NR3A-2</name>
        <sequence type="displayed"/>
    </isoform>
    <isoform>
        <id>Q9R1M7-2</id>
        <name>2</name>
        <name>NR3-short</name>
        <name>NR3-s</name>
        <sequence type="described" ref="VSP_011512"/>
    </isoform>
</comment>
<comment type="tissue specificity">
    <text evidence="15 16 17">Isoform 1 and isoform 2 are expressed in olfactory bulb, frontal occipital, entorhinal and pyriform cortices, hippocampus, striatum, thalamus, cerebellum and spinal cord.</text>
</comment>
<comment type="developmental stage">
    <text evidence="13 15 16 17">Isoform 1 and isoform 2 are expressed in spinal cord, medulla, pons, tegmentum, thalamus and hypothalamus at 15 dpc onwards (PubMed:7472412, PubMed:7472413, PubMed:9891978). In the brain cortex and in the hippocampus, strongly expressed during periods of synapse/spine reorganization at postnatal day 8 (P8) to P15. Expression declines after P25 (at protein level) (PubMed:24297929).</text>
</comment>
<comment type="PTM">
    <text evidence="5">N-glycosylated.</text>
</comment>
<comment type="similarity">
    <text evidence="21">Belongs to the glutamate-gated ion channel (TC 1.A.10.1) family. NR3A/GRIN3A subfamily.</text>
</comment>
<protein>
    <recommendedName>
        <fullName evidence="21">Glutamate receptor ionotropic, NMDA 3A</fullName>
        <shortName evidence="18">GluN3A</shortName>
    </recommendedName>
    <alternativeName>
        <fullName evidence="19">Glutamate receptor chi-1</fullName>
    </alternativeName>
    <alternativeName>
        <fullName>N-methyl-D-aspartate receptor</fullName>
    </alternativeName>
    <alternativeName>
        <fullName>N-methyl-D-aspartate receptor subtype 3A</fullName>
        <shortName>NMDAR3A</shortName>
        <shortName evidence="2">NR3A</shortName>
    </alternativeName>
    <alternativeName>
        <fullName evidence="20">NMDAR-L</fullName>
    </alternativeName>
    <alternativeName>
        <fullName>NMDAR-L1</fullName>
    </alternativeName>
</protein>
<reference key="1">
    <citation type="journal article" date="1995" name="J. Neurosci.">
        <title>Cloning and characterization of chi-1: a developmentally regulated member of a novel class of the ionotropic glutamate receptor family.</title>
        <authorList>
            <person name="Ciabarra A.M."/>
            <person name="Sullivan J.M."/>
            <person name="Gahn L.G."/>
            <person name="Pecht G."/>
            <person name="Heinemann S."/>
            <person name="Sevarino K.A."/>
        </authorList>
    </citation>
    <scope>NUCLEOTIDE SEQUENCE [MRNA] (ISOFORM 2)</scope>
    <scope>FUNCTION</scope>
    <scope>TISSUE SPECIFICITY</scope>
    <scope>DEVELOPMENTAL STAGE</scope>
    <source>
        <strain>Sprague-Dawley</strain>
        <tissue>Brain stem</tissue>
        <tissue>Spinal cord</tissue>
    </source>
</reference>
<reference key="2">
    <citation type="journal article" date="1995" name="J. Neurosci.">
        <title>Developmental and regional expression pattern of a novel NMDA receptor-like subunit (NMDAR-L) in the rodent brain.</title>
        <authorList>
            <person name="Sucher N.J."/>
            <person name="Akbarian S."/>
            <person name="Chi C.L."/>
            <person name="Leclerc C.L."/>
            <person name="Awobuluyi M."/>
            <person name="Deitcher D.L."/>
            <person name="Wu M.K."/>
            <person name="Yuan J.P."/>
            <person name="Jones E.G."/>
            <person name="Lipton S.A."/>
        </authorList>
    </citation>
    <scope>NUCLEOTIDE SEQUENCE [MRNA] (ISOFORM 2)</scope>
    <scope>TISSUE SPECIFICITY</scope>
    <scope>DEVELOPMENTAL STAGE</scope>
    <source>
        <tissue>Forebrain</tissue>
    </source>
</reference>
<reference key="3">
    <citation type="submission" date="1998-06" db="EMBL/GenBank/DDBJ databases">
        <title>Altered single channel properties of NMDA receptors containing a novel NMDA receptor subunit splice variant, NR3A-2.</title>
        <authorList>
            <person name="Perez-Otano I."/>
            <person name="Contractor A."/>
            <person name="Schulteis C.T."/>
            <person name="Gibb A."/>
            <person name="Heinemann S.F."/>
        </authorList>
    </citation>
    <scope>NUCLEOTIDE SEQUENCE [MRNA] (ISOFORM 1)</scope>
    <source>
        <strain>Sprague-Dawley</strain>
        <tissue>Hippocampus</tissue>
    </source>
</reference>
<reference key="4">
    <citation type="journal article" date="1998" name="FEBS Lett.">
        <title>Identification of a long variant of mRNA encoding the NR3 subunit of the NMDA receptor: its regional distribution and developmental expression in the rat brain.</title>
        <authorList>
            <person name="Sun L."/>
            <person name="Margolis F.L."/>
            <person name="Shipley M.T."/>
            <person name="Lidow M.S."/>
        </authorList>
    </citation>
    <scope>NUCLEOTIDE SEQUENCE [MRNA] OF 839-1122 (ISOFORMS 1/2)</scope>
    <scope>TISSUE SPECIFICITY</scope>
    <scope>DEVELOPMENTAL STAGE</scope>
    <source>
        <tissue>Brain</tissue>
    </source>
</reference>
<reference key="5">
    <citation type="journal article" date="2001" name="J. Neurosci.">
        <title>An NMDA receptor signaling complex with protein phosphatase 2A.</title>
        <authorList>
            <person name="Chan S.F."/>
            <person name="Sucher N.J."/>
        </authorList>
    </citation>
    <scope>SUBCELLULAR LOCATION</scope>
    <scope>IDENTIFICATION IN A COMPLEX WITH GRIN1; GRIN2A OR GRIN2B AND PPP2CB</scope>
    <scope>INTERACTION WITH PPP2CB</scope>
</reference>
<reference key="6">
    <citation type="journal article" date="2001" name="J. Neurosci.">
        <title>Assembly with the NR1 subunit is required for surface expression of NR3A-containing NMDA receptors.</title>
        <authorList>
            <person name="Perez-Otano I."/>
            <person name="Schulteis C.T."/>
            <person name="Contractor A."/>
            <person name="Lipton S.A."/>
            <person name="Trimmer J.S."/>
            <person name="Sucher N.J."/>
            <person name="Heinemann S.F."/>
        </authorList>
    </citation>
    <scope>FUNCTION</scope>
    <scope>TRANSPORTER ACTIVITY</scope>
    <scope>GLYCOSYLATION</scope>
    <scope>SUBCELLULAR LOCATION</scope>
    <scope>IDENTIFICATION IN A COMPLEX WITH GRIN1; GRIN2A OR GRIN2B</scope>
</reference>
<reference key="7">
    <citation type="journal article" date="2002" name="J. Neurophysiol.">
        <title>Characterization and comparison of the NR3A subunit of the NMDA receptor in recombinant systems and primary cortical neurons.</title>
        <authorList>
            <person name="Sasaki Y.F."/>
            <person name="Rothe T."/>
            <person name="Premkumar L.S."/>
            <person name="Das S."/>
            <person name="Cui J."/>
            <person name="Talantova M.V."/>
            <person name="Wong H.-K."/>
            <person name="Gong X."/>
            <person name="Chan S.F."/>
            <person name="Zhang D."/>
            <person name="Nakanishi N."/>
            <person name="Sucher N.J."/>
            <person name="Lipton S.A."/>
        </authorList>
    </citation>
    <scope>FUNCTION</scope>
    <scope>TRANSPORTER ACTIVITY</scope>
    <scope>SUBUNIT</scope>
    <scope>IDENTIFICATION IN A COMPLEX WITH GRIN1 AND GRIN2B</scope>
</reference>
<reference key="8">
    <citation type="journal article" date="2002" name="Mol. Pharmacol.">
        <title>Association of NR3A with the N-methyl-D-aspartate receptor NR1 and NR2 subunits.</title>
        <authorList>
            <person name="Al-Hallaq R.A."/>
            <person name="Jarabek B.R."/>
            <person name="Fu Z."/>
            <person name="Vicini S."/>
            <person name="Wolfe B.B."/>
            <person name="Yasuda R.P."/>
        </authorList>
    </citation>
    <scope>IDENTIFICATION IN A COMPLEX WITH GRIN1; GRIN2A OR GRIN2B</scope>
</reference>
<reference key="9">
    <citation type="journal article" date="2002" name="Nature">
        <title>Excitatory glycine receptors containing the NR3 family of NMDA receptor subunits.</title>
        <authorList>
            <person name="Chatterton J.E."/>
            <person name="Awobuluyi M."/>
            <person name="Premkumar L.S."/>
            <person name="Takahashi H."/>
            <person name="Talantova M."/>
            <person name="Shin Y."/>
            <person name="Cui J."/>
            <person name="Tu S."/>
            <person name="Sevarino K.K.A."/>
            <person name="Nakanishi N."/>
            <person name="Tong G."/>
            <person name="Lipton S.A."/>
            <person name="Zhang D."/>
        </authorList>
    </citation>
    <scope>FUNCTION</scope>
    <scope>ACTIVITY REGULATION</scope>
</reference>
<reference key="10">
    <citation type="journal article" date="2008" name="J. Neurophysiol.">
        <title>Modulation of NMDA receptor properties and synaptic transmission by the NR3A subunit in mouse hippocampal and cerebrocortical neurons.</title>
        <authorList>
            <person name="Tong G."/>
            <person name="Takahashi H."/>
            <person name="Tu S."/>
            <person name="Shin Y."/>
            <person name="Talantova M."/>
            <person name="Zago W."/>
            <person name="Xia P."/>
            <person name="Nie Z."/>
            <person name="Goetz T."/>
            <person name="Zhang D."/>
            <person name="Lipton S.A."/>
            <person name="Nakanishi N."/>
        </authorList>
    </citation>
    <scope>FUNCTION</scope>
    <scope>TRANSPORTER ACTIVITY</scope>
</reference>
<reference key="11">
    <citation type="journal article" date="2013" name="Proc. Natl. Acad. Sci. U.S.A.">
        <title>GluN3A expression restricts spine maturation via inhibition of GIT1/Rac1 signaling.</title>
        <authorList>
            <person name="Fiuza M."/>
            <person name="Gonzalez-Gonzalez I."/>
            <person name="Perez-Otano I."/>
        </authorList>
    </citation>
    <scope>FUNCTION</scope>
    <scope>INTERACTION WITH GIT1</scope>
</reference>
<reference key="12">
    <citation type="journal article" date="2014" name="J. Neurosci.">
        <title>GluN3A promotes dendritic spine pruning and destabilization during postnatal development.</title>
        <authorList>
            <person name="Kehoe L.A."/>
            <person name="Bellone C."/>
            <person name="De Roo M."/>
            <person name="Zandueta A."/>
            <person name="Dey P.N."/>
            <person name="Perez-Otano I."/>
            <person name="Muller D."/>
        </authorList>
    </citation>
    <scope>FUNCTION</scope>
    <scope>MUTAGENESIS OF 971-TYR--LEU-973 AND 1082-ASN--LEU-1115</scope>
</reference>
<reference evidence="23 24 25" key="13">
    <citation type="journal article" date="2008" name="EMBO J.">
        <title>Molecular mechanism of ligand recognition by NR3 subtype glutamate receptors.</title>
        <authorList>
            <person name="Yao Y."/>
            <person name="Harrison C.B."/>
            <person name="Freddolino P.L."/>
            <person name="Schulten K."/>
            <person name="Mayer M.L."/>
        </authorList>
    </citation>
    <scope>X-RAY CRYSTALLOGRAPHY (1.45 ANGSTROMS) OF 511-915 IN COMPLEX WITH D-SERINE AND GLYCINE</scope>
    <scope>FUNCTION</scope>
    <scope>DISULFIDE BONDS</scope>
</reference>
<reference evidence="26" key="14">
    <citation type="journal article" date="2013" name="Structure">
        <title>Conformational analysis of NMDA receptor GluN1, GluN2, and GluN3 ligand-binding domains reveals subtype-specific characteristics.</title>
        <authorList>
            <person name="Yao Y."/>
            <person name="Belcher J."/>
            <person name="Berger A.J."/>
            <person name="Mayer M.L."/>
            <person name="Lau A.Y."/>
        </authorList>
    </citation>
    <scope>X-RAY CRYSTALLOGRAPHY (1.68 ANGSTROMS) OF 511-660 AND 776-915</scope>
    <scope>DISULFIDE BONDS</scope>
</reference>
<dbReference type="EMBL" id="L34938">
    <property type="protein sequence ID" value="AAA99501.1"/>
    <property type="molecule type" value="mRNA"/>
</dbReference>
<dbReference type="EMBL" id="U29873">
    <property type="protein sequence ID" value="AAB58957.1"/>
    <property type="molecule type" value="mRNA"/>
</dbReference>
<dbReference type="EMBL" id="AF073379">
    <property type="protein sequence ID" value="AAD41650.1"/>
    <property type="molecule type" value="mRNA"/>
</dbReference>
<dbReference type="EMBL" id="AF061945">
    <property type="protein sequence ID" value="AAD11811.1"/>
    <property type="molecule type" value="mRNA"/>
</dbReference>
<dbReference type="PIR" id="T31068">
    <property type="entry name" value="T31068"/>
</dbReference>
<dbReference type="RefSeq" id="NP_001185512.1">
    <molecule id="Q9R1M7-2"/>
    <property type="nucleotide sequence ID" value="NM_001198583.2"/>
</dbReference>
<dbReference type="RefSeq" id="NP_612555.1">
    <molecule id="Q9R1M7-1"/>
    <property type="nucleotide sequence ID" value="NM_138546.2"/>
</dbReference>
<dbReference type="PDB" id="2RC7">
    <property type="method" value="X-ray"/>
    <property type="resolution" value="1.58 A"/>
    <property type="chains" value="A/B=511-660, A/B=776-915"/>
</dbReference>
<dbReference type="PDB" id="2RC8">
    <property type="method" value="X-ray"/>
    <property type="resolution" value="1.45 A"/>
    <property type="chains" value="A/B=511-660, A/B=776-915"/>
</dbReference>
<dbReference type="PDB" id="2RC9">
    <property type="method" value="X-ray"/>
    <property type="resolution" value="1.96 A"/>
    <property type="chains" value="A/B=511-660, A/B=776-915"/>
</dbReference>
<dbReference type="PDB" id="4KCD">
    <property type="method" value="X-ray"/>
    <property type="resolution" value="1.68 A"/>
    <property type="chains" value="A/B=511-660, A/B=776-915"/>
</dbReference>
<dbReference type="PDB" id="8JF7">
    <property type="method" value="EM"/>
    <property type="resolution" value="7.73 A"/>
    <property type="chains" value="D=1-965"/>
</dbReference>
<dbReference type="PDBsum" id="2RC7"/>
<dbReference type="PDBsum" id="2RC8"/>
<dbReference type="PDBsum" id="2RC9"/>
<dbReference type="PDBsum" id="4KCD"/>
<dbReference type="PDBsum" id="8JF7"/>
<dbReference type="SMR" id="Q9R1M7"/>
<dbReference type="BioGRID" id="251320">
    <property type="interactions" value="2"/>
</dbReference>
<dbReference type="CORUM" id="Q9R1M7"/>
<dbReference type="FunCoup" id="Q9R1M7">
    <property type="interactions" value="609"/>
</dbReference>
<dbReference type="IntAct" id="Q9R1M7">
    <property type="interactions" value="2"/>
</dbReference>
<dbReference type="STRING" id="10116.ENSRNOP00000007957"/>
<dbReference type="BindingDB" id="Q9R1M7"/>
<dbReference type="ChEMBL" id="CHEMBL342"/>
<dbReference type="DrugCentral" id="Q9R1M7"/>
<dbReference type="GlyCosmos" id="Q9R1M7">
    <property type="glycosylation" value="11 sites, No reported glycans"/>
</dbReference>
<dbReference type="GlyGen" id="Q9R1M7">
    <property type="glycosylation" value="11 sites"/>
</dbReference>
<dbReference type="iPTMnet" id="Q9R1M7"/>
<dbReference type="PhosphoSitePlus" id="Q9R1M7"/>
<dbReference type="PaxDb" id="10116-ENSRNOP00000007957"/>
<dbReference type="ABCD" id="Q9R1M7">
    <property type="antibodies" value="1 sequenced antibody"/>
</dbReference>
<dbReference type="Ensembl" id="ENSRNOT00000007957.7">
    <molecule id="Q9R1M7-1"/>
    <property type="protein sequence ID" value="ENSRNOP00000007957.6"/>
    <property type="gene ID" value="ENSRNOG00000005723.8"/>
</dbReference>
<dbReference type="GeneID" id="191573"/>
<dbReference type="KEGG" id="rno:191573"/>
<dbReference type="UCSC" id="RGD:621704">
    <molecule id="Q9R1M7-1"/>
    <property type="organism name" value="rat"/>
</dbReference>
<dbReference type="AGR" id="RGD:621704"/>
<dbReference type="CTD" id="116443"/>
<dbReference type="RGD" id="621704">
    <property type="gene designation" value="Grin3a"/>
</dbReference>
<dbReference type="eggNOG" id="KOG1053">
    <property type="taxonomic scope" value="Eukaryota"/>
</dbReference>
<dbReference type="GeneTree" id="ENSGT00940000158571"/>
<dbReference type="InParanoid" id="Q9R1M7"/>
<dbReference type="OMA" id="NCHRRKY"/>
<dbReference type="OrthoDB" id="5984008at2759"/>
<dbReference type="PhylomeDB" id="Q9R1M7"/>
<dbReference type="TreeFam" id="TF314731"/>
<dbReference type="Reactome" id="R-RNO-9609736">
    <property type="pathway name" value="Assembly and cell surface presentation of NMDA receptors"/>
</dbReference>
<dbReference type="EvolutionaryTrace" id="Q9R1M7"/>
<dbReference type="PRO" id="PR:Q9R1M7"/>
<dbReference type="Proteomes" id="UP000002494">
    <property type="component" value="Chromosome 5"/>
</dbReference>
<dbReference type="GO" id="GO:0005737">
    <property type="term" value="C:cytoplasm"/>
    <property type="evidence" value="ECO:0000314"/>
    <property type="project" value="RGD"/>
</dbReference>
<dbReference type="GO" id="GO:0005789">
    <property type="term" value="C:endoplasmic reticulum membrane"/>
    <property type="evidence" value="ECO:0000304"/>
    <property type="project" value="Reactome"/>
</dbReference>
<dbReference type="GO" id="GO:0098978">
    <property type="term" value="C:glutamatergic synapse"/>
    <property type="evidence" value="ECO:0000314"/>
    <property type="project" value="SynGO"/>
</dbReference>
<dbReference type="GO" id="GO:0016020">
    <property type="term" value="C:membrane"/>
    <property type="evidence" value="ECO:0000266"/>
    <property type="project" value="RGD"/>
</dbReference>
<dbReference type="GO" id="GO:0034702">
    <property type="term" value="C:monoatomic ion channel complex"/>
    <property type="evidence" value="ECO:0000266"/>
    <property type="project" value="RGD"/>
</dbReference>
<dbReference type="GO" id="GO:0043005">
    <property type="term" value="C:neuron projection"/>
    <property type="evidence" value="ECO:0000266"/>
    <property type="project" value="RGD"/>
</dbReference>
<dbReference type="GO" id="GO:0043025">
    <property type="term" value="C:neuronal cell body"/>
    <property type="evidence" value="ECO:0000266"/>
    <property type="project" value="RGD"/>
</dbReference>
<dbReference type="GO" id="GO:0098878">
    <property type="term" value="C:neurotransmitter receptor complex"/>
    <property type="evidence" value="ECO:0000266"/>
    <property type="project" value="RGD"/>
</dbReference>
<dbReference type="GO" id="GO:0017146">
    <property type="term" value="C:NMDA selective glutamate receptor complex"/>
    <property type="evidence" value="ECO:0000314"/>
    <property type="project" value="UniProtKB"/>
</dbReference>
<dbReference type="GO" id="GO:0005886">
    <property type="term" value="C:plasma membrane"/>
    <property type="evidence" value="ECO:0000318"/>
    <property type="project" value="GO_Central"/>
</dbReference>
<dbReference type="GO" id="GO:0098839">
    <property type="term" value="C:postsynaptic density membrane"/>
    <property type="evidence" value="ECO:0000314"/>
    <property type="project" value="SynGO"/>
</dbReference>
<dbReference type="GO" id="GO:0045211">
    <property type="term" value="C:postsynaptic membrane"/>
    <property type="evidence" value="ECO:0000314"/>
    <property type="project" value="UniProtKB"/>
</dbReference>
<dbReference type="GO" id="GO:0098793">
    <property type="term" value="C:presynapse"/>
    <property type="evidence" value="ECO:0007669"/>
    <property type="project" value="GOC"/>
</dbReference>
<dbReference type="GO" id="GO:0045202">
    <property type="term" value="C:synapse"/>
    <property type="evidence" value="ECO:0000266"/>
    <property type="project" value="RGD"/>
</dbReference>
<dbReference type="GO" id="GO:0005262">
    <property type="term" value="F:calcium channel activity"/>
    <property type="evidence" value="ECO:0000266"/>
    <property type="project" value="RGD"/>
</dbReference>
<dbReference type="GO" id="GO:0008066">
    <property type="term" value="F:glutamate receptor activity"/>
    <property type="evidence" value="ECO:0000318"/>
    <property type="project" value="GO_Central"/>
</dbReference>
<dbReference type="GO" id="GO:0004970">
    <property type="term" value="F:glutamate-gated receptor activity"/>
    <property type="evidence" value="ECO:0000314"/>
    <property type="project" value="RGD"/>
</dbReference>
<dbReference type="GO" id="GO:0016594">
    <property type="term" value="F:glycine binding"/>
    <property type="evidence" value="ECO:0000314"/>
    <property type="project" value="UniProtKB"/>
</dbReference>
<dbReference type="GO" id="GO:0042802">
    <property type="term" value="F:identical protein binding"/>
    <property type="evidence" value="ECO:0000266"/>
    <property type="project" value="RGD"/>
</dbReference>
<dbReference type="GO" id="GO:0004972">
    <property type="term" value="F:NMDA glutamate receptor activity"/>
    <property type="evidence" value="ECO:0000314"/>
    <property type="project" value="RGD"/>
</dbReference>
<dbReference type="GO" id="GO:0051721">
    <property type="term" value="F:protein phosphatase 2A binding"/>
    <property type="evidence" value="ECO:0000314"/>
    <property type="project" value="UniProtKB"/>
</dbReference>
<dbReference type="GO" id="GO:0070905">
    <property type="term" value="F:serine binding"/>
    <property type="evidence" value="ECO:0000314"/>
    <property type="project" value="UniProtKB"/>
</dbReference>
<dbReference type="GO" id="GO:0022824">
    <property type="term" value="F:transmitter-gated monoatomic ion channel activity"/>
    <property type="evidence" value="ECO:0000314"/>
    <property type="project" value="UniProtKB"/>
</dbReference>
<dbReference type="GO" id="GO:1904315">
    <property type="term" value="F:transmitter-gated monoatomic ion channel activity involved in regulation of postsynaptic membrane potential"/>
    <property type="evidence" value="ECO:0000266"/>
    <property type="project" value="RGD"/>
</dbReference>
<dbReference type="GO" id="GO:0006816">
    <property type="term" value="P:calcium ion transport"/>
    <property type="evidence" value="ECO:0000314"/>
    <property type="project" value="UniProtKB"/>
</dbReference>
<dbReference type="GO" id="GO:0016358">
    <property type="term" value="P:dendrite development"/>
    <property type="evidence" value="ECO:0000266"/>
    <property type="project" value="RGD"/>
</dbReference>
<dbReference type="GO" id="GO:0035235">
    <property type="term" value="P:ionotropic glutamate receptor signaling pathway"/>
    <property type="evidence" value="ECO:0000314"/>
    <property type="project" value="RGD"/>
</dbReference>
<dbReference type="GO" id="GO:0050804">
    <property type="term" value="P:modulation of chemical synaptic transmission"/>
    <property type="evidence" value="ECO:0000318"/>
    <property type="project" value="GO_Central"/>
</dbReference>
<dbReference type="GO" id="GO:0098655">
    <property type="term" value="P:monoatomic cation transmembrane transport"/>
    <property type="evidence" value="ECO:0000314"/>
    <property type="project" value="UniProtKB"/>
</dbReference>
<dbReference type="GO" id="GO:0061000">
    <property type="term" value="P:negative regulation of dendritic spine development"/>
    <property type="evidence" value="ECO:0000314"/>
    <property type="project" value="UniProtKB"/>
</dbReference>
<dbReference type="GO" id="GO:0048666">
    <property type="term" value="P:neuron development"/>
    <property type="evidence" value="ECO:0000270"/>
    <property type="project" value="RGD"/>
</dbReference>
<dbReference type="GO" id="GO:0060134">
    <property type="term" value="P:prepulse inhibition"/>
    <property type="evidence" value="ECO:0000266"/>
    <property type="project" value="RGD"/>
</dbReference>
<dbReference type="GO" id="GO:0099171">
    <property type="term" value="P:presynaptic modulation of chemical synaptic transmission"/>
    <property type="evidence" value="ECO:0000266"/>
    <property type="project" value="RGD"/>
</dbReference>
<dbReference type="GO" id="GO:0048167">
    <property type="term" value="P:regulation of synaptic plasticity"/>
    <property type="evidence" value="ECO:0000314"/>
    <property type="project" value="UniProtKB"/>
</dbReference>
<dbReference type="GO" id="GO:0045471">
    <property type="term" value="P:response to ethanol"/>
    <property type="evidence" value="ECO:0000266"/>
    <property type="project" value="RGD"/>
</dbReference>
<dbReference type="GO" id="GO:0048511">
    <property type="term" value="P:rhythmic process"/>
    <property type="evidence" value="ECO:0000314"/>
    <property type="project" value="RGD"/>
</dbReference>
<dbReference type="GO" id="GO:0035249">
    <property type="term" value="P:synaptic transmission, glutamatergic"/>
    <property type="evidence" value="ECO:0000318"/>
    <property type="project" value="GO_Central"/>
</dbReference>
<dbReference type="CDD" id="cd06377">
    <property type="entry name" value="PBP1_iGluR_NMDA_NR3"/>
    <property type="match status" value="1"/>
</dbReference>
<dbReference type="CDD" id="cd13720">
    <property type="entry name" value="PBP2_iGluR_NMDA_Nr3"/>
    <property type="match status" value="1"/>
</dbReference>
<dbReference type="FunFam" id="3.40.50.2300:FF:000128">
    <property type="entry name" value="Glutamate ionotropic receptor NMDA type subunit 3A"/>
    <property type="match status" value="1"/>
</dbReference>
<dbReference type="FunFam" id="3.40.190.10:FF:000066">
    <property type="entry name" value="Glutamate receptor ionotropic, NMDA 3A"/>
    <property type="match status" value="1"/>
</dbReference>
<dbReference type="FunFam" id="3.40.190.10:FF:000045">
    <property type="entry name" value="Putative glutamate receptor ionotropic NMDA 3A"/>
    <property type="match status" value="1"/>
</dbReference>
<dbReference type="Gene3D" id="3.40.50.2300">
    <property type="match status" value="2"/>
</dbReference>
<dbReference type="Gene3D" id="3.40.190.10">
    <property type="entry name" value="Periplasmic binding protein-like II"/>
    <property type="match status" value="2"/>
</dbReference>
<dbReference type="InterPro" id="IPR001828">
    <property type="entry name" value="ANF_lig-bd_rcpt"/>
</dbReference>
<dbReference type="InterPro" id="IPR019594">
    <property type="entry name" value="Glu/Gly-bd"/>
</dbReference>
<dbReference type="InterPro" id="IPR001508">
    <property type="entry name" value="Iono_Glu_rcpt_met"/>
</dbReference>
<dbReference type="InterPro" id="IPR015683">
    <property type="entry name" value="Ionotropic_Glu_rcpt"/>
</dbReference>
<dbReference type="InterPro" id="IPR001320">
    <property type="entry name" value="Iontro_rcpt_C"/>
</dbReference>
<dbReference type="InterPro" id="IPR028082">
    <property type="entry name" value="Peripla_BP_I"/>
</dbReference>
<dbReference type="PANTHER" id="PTHR18966">
    <property type="entry name" value="IONOTROPIC GLUTAMATE RECEPTOR"/>
    <property type="match status" value="1"/>
</dbReference>
<dbReference type="Pfam" id="PF01094">
    <property type="entry name" value="ANF_receptor"/>
    <property type="match status" value="1"/>
</dbReference>
<dbReference type="Pfam" id="PF00060">
    <property type="entry name" value="Lig_chan"/>
    <property type="match status" value="1"/>
</dbReference>
<dbReference type="Pfam" id="PF10613">
    <property type="entry name" value="Lig_chan-Glu_bd"/>
    <property type="match status" value="1"/>
</dbReference>
<dbReference type="PRINTS" id="PR00177">
    <property type="entry name" value="NMDARECEPTOR"/>
</dbReference>
<dbReference type="SMART" id="SM00918">
    <property type="entry name" value="Lig_chan-Glu_bd"/>
    <property type="match status" value="1"/>
</dbReference>
<dbReference type="SMART" id="SM00079">
    <property type="entry name" value="PBPe"/>
    <property type="match status" value="1"/>
</dbReference>
<dbReference type="SUPFAM" id="SSF53822">
    <property type="entry name" value="Periplasmic binding protein-like I"/>
    <property type="match status" value="1"/>
</dbReference>
<dbReference type="SUPFAM" id="SSF53850">
    <property type="entry name" value="Periplasmic binding protein-like II"/>
    <property type="match status" value="1"/>
</dbReference>
<name>NMD3A_RAT</name>
<proteinExistence type="evidence at protein level"/>
<sequence>MRRLSLWWLLSRVCLLLPPPCALVLAGVPSSSSHPQPCQILKRIGHAVRVGAVHLQPWTTAPRAASRAQEGGRAGAQRDDPESGTWRPPAPSQGARWLGSALHGRGPPGSRKLGEGAGAETLWPRDALLFAVENLNRVEGLLPYNLSLEVVMAIEAGLGDLPLMPFSSPSSPWSSDPFSFLQSVCHTVVVQGVSALLAFPQSQGEMMELDLVSSVLHIPVLSIVRHEFPRESQNPLHLQLSLENSLSSDADVTVSILTMNNWYNFSLLLCQEDWNITDFLLLTENNSKFHLESVINITANLSSTKDLLSFLQVQMDNIRNSTPTMVMFGCDMDSIRQIFEMSTQFGLSPPELHWVLGDSQNVEELRTEGLPLGLIAHGKTTQSVFEYYVQDAMELVARAVATATMIQPELALLPSTMNCMDVKTTNLTSGQYLSRFLANTTFRGLSGSIKVKGSTIISSENNFFIWNLQHDPMGKPMWTRLGSWQGGRIVMDSGIWPEQAQRHKTHFQHPNKLHLRVVTLIEHPFVFTREVDDEGLCPAGQLCLDPMTNDSSMLDRLFSSLHSSNDTVPIKFKKCCYGYCIDLLEQLAEDMNFDFDLYIVGDGKYGAWKNGHWTGLVGDLLSGTANMAVTSFSINTARSQVIDFTSPFFSTSLGILVRTRDTAAPIGAFMWPLHWTMWLGIFVALHITAIFLTLYEWKSPFGMTPKGRNRNKVFSFSSALNVCYALLFGRTAAIKPPKCWTGRFLMNLWAIFCMFCLSTYTANLAAVMVGEKIYEELSGIHDPKLHHPSQGFRFGTVRESSAEDYVRQSFPEMHEYMRRYNVPATPDGVQYLKNDPEKLDAFIMDKALLDYEVSIDADCKLLTVGKPFAIEGYGIGLPPNSPLTSNISELISQYKSHGFMDVLHDKWYKVVPCGKRSFAVTETLQMGIKHFSGLFVLLCIGFGLSILTTIGEHIVHRLLLPRIKNKSKLQYWLHTSQRFHRALNTSFVEEKQPRSKTKRVEKSRWRRWTCKTEGDSELSLFPRSNLGPQQLMVWNTSNLSHDNQRKYIFNDEEGQNQLGTQAHQDIPLPQRRRELPASLTTNGKADSLNVTRSSVIQELSELEKQIQVIRQELQLAVSRKTELEEYQKTNRTCES</sequence>
<organism>
    <name type="scientific">Rattus norvegicus</name>
    <name type="common">Rat</name>
    <dbReference type="NCBI Taxonomy" id="10116"/>
    <lineage>
        <taxon>Eukaryota</taxon>
        <taxon>Metazoa</taxon>
        <taxon>Chordata</taxon>
        <taxon>Craniata</taxon>
        <taxon>Vertebrata</taxon>
        <taxon>Euteleostomi</taxon>
        <taxon>Mammalia</taxon>
        <taxon>Eutheria</taxon>
        <taxon>Euarchontoglires</taxon>
        <taxon>Glires</taxon>
        <taxon>Rodentia</taxon>
        <taxon>Myomorpha</taxon>
        <taxon>Muroidea</taxon>
        <taxon>Muridae</taxon>
        <taxon>Murinae</taxon>
        <taxon>Rattus</taxon>
    </lineage>
</organism>